<sequence>MKPVKHLLTTSNKSANVPALTTKKGLHNLPLSPELKEKHNAKLIHDKIEPMVLRSPPTGESILRYALPIPSSKTKNLLPEDEMIGKIIKHLKMVVSTLEETYGHCDQNGEEPFVKHEHEELSLSVGDDMNSFLTYCSQFAAQLEEALKEEQNILESLFKWFQWQVNQMEEISKDQTLLQAEPPKPDKTVILNIAEIVRLVQRFEELKNRLKQRSKSSVKVMLSKTMDKENRPEAVKSCEALAQKIEEFLEAHSTDEFKDVSATEPQTAHSMTNRFNAMLKVFENQANMLERAVNDQVLLDAEYKQMQCDFQLLSEEKLVLENELQKLKDKEKTKPTNNRTKKAVKTVKKKDKGKSEDSEKKMSPEKEFKIKEDLDQVQKVARLEIENKVLQEQLKQALQEAEKAKHQLNYFLNQEKLLKSEGKTETTMQVGNSQTKVKGEDSKNIPLEKETRKSLVSDSGGQRTSDKIQEYPQITAQSGRLIEKSSEKKRSSPAISDLSQILKSQDESAFLESSNEVSVAENQSYKSPSETHDKSLTTVSSSKEVQDSLSVGTLAQKNETVISPFILPPVLTESKKADVSEEQLQKMTEEQTYQAAEKSQADSEVPDENLMVENKDSVTKVQIEQMKQRTSSMERHEETLTTPQLPEDMVLVSRIQSETKNLKATRNESFHSHNDVPEENLMLEQDTKSKTEVEVKKQKSFQDNQLSTHNEVPNERLVVEHQESLSKTKLQIKKQETSTEQPLTTPDKEPNENLILRHQDSMSKSEMQVKEQRTLKGQRIITHDEEPGKNLVLEHQDSVSKLEMQIEKTKKLPREKRHSTHDEESGENPMLKHQDSVSKIQVQLEIQETSEGEGRSIPDKNSMFVHQDSVSKLQMQEKKKITPGRERRNTRIVVPNENVISVHQDSKSKLQMQEKKQINSGVERHKTFPLEIKKKDISLEHLLPEEKVLLSRSESQTKKLQAKVTSRKIKNEAASELPDTAENLPAMYPSISDLIIQFDLNKVVETDIESLRGALGRRLLNDEFKTQSKSFPGPDIEQLTDAFGRDILKDEFKTRSKSLPETDERLHSTTERGTINDAIKTQLKRKSYPETVLKHLKGVNGKDIIKHLINIQSKSHGETDKEHLADDTGRGIIKGSINAQLKGHQKTDKNFFAYATGRGLMKESTTTQLKSHPETDKEFLADAIGRGIIIGPITTQLKSHRETDKELLKDAIGRDIIKGPISAQLKSHQETDVEPLTNAIGSSKTIGEIKTQLRTHYDVNLFKNKDMSVQRQEGIFTRSITPSKFPTKVINLSPFENKEETYEYSSPYVTAPSKAIYRTYRAGPSFSKDIHLPLLNQLPSGHSKVVTLSQKTIEFTLPTVTNTVGKPTYKVLHAAARKSVPHPYF</sequence>
<comment type="function">
    <text evidence="1">May play a role in tumorigenesis.</text>
</comment>
<comment type="interaction">
    <interactant intactId="EBI-18211613">
        <id>Q96M83-3</id>
    </interactant>
    <interactant intactId="EBI-466029">
        <id>P42858</id>
        <label>HTT</label>
    </interactant>
    <organismsDiffer>false</organismsDiffer>
    <experiments>18</experiments>
</comment>
<comment type="interaction">
    <interactant intactId="EBI-18211613">
        <id>Q96M83-3</id>
    </interactant>
    <interactant intactId="EBI-398874">
        <id>Q9UBU9</id>
        <label>NXF1</label>
    </interactant>
    <organismsDiffer>false</organismsDiffer>
    <experiments>3</experiments>
</comment>
<comment type="alternative products">
    <event type="alternative splicing"/>
    <isoform>
        <id>Q96M83-1</id>
        <name>1</name>
        <sequence type="displayed"/>
    </isoform>
    <isoform>
        <id>Q96M83-2</id>
        <name>2</name>
        <sequence type="described" ref="VSP_010525 VSP_010526"/>
    </isoform>
    <isoform>
        <id>Q96M83-3</id>
        <name>3</name>
        <sequence type="described" ref="VSP_058369 VSP_058370"/>
    </isoform>
    <isoform>
        <id>Q96M83-4</id>
        <name>4</name>
        <sequence type="described" ref="VSP_058367 VSP_058368"/>
    </isoform>
    <isoform>
        <id>Q96M83-5</id>
        <name>5</name>
        <sequence type="described" ref="VSP_058366 VSP_058371"/>
    </isoform>
</comment>
<comment type="tissue specificity">
    <text evidence="5">Expressed in epithelium of normal cervix and cervical cancer. Overexpressed in early and interim cervical cancer.</text>
</comment>
<comment type="miscellaneous">
    <molecule>Isoform 2</molecule>
    <text evidence="7">May be produced at very low levels due to a premature stop codon in the mRNA, leading to nonsense-mediated mRNA decay.</text>
</comment>
<comment type="miscellaneous">
    <molecule>Isoform 4</molecule>
    <text evidence="7">May be produced at very low levels due to a premature stop codon in the mRNA, leading to nonsense-mediated mRNA decay.</text>
</comment>
<comment type="miscellaneous">
    <molecule>Isoform 5</molecule>
    <text evidence="7">May be produced at very low levels due to a premature stop codon in the mRNA, leading to nonsense-mediated mRNA decay.</text>
</comment>
<comment type="sequence caution" evidence="7">
    <conflict type="erroneous translation">
        <sequence resource="EMBL-CDS" id="AAI25092"/>
    </conflict>
    <text>Wrong choice of frame.</text>
</comment>
<comment type="sequence caution" evidence="7">
    <conflict type="erroneous translation">
        <sequence resource="EMBL-CDS" id="BAB14400"/>
    </conflict>
    <text>Wrong choice of frame.</text>
</comment>
<comment type="sequence caution" evidence="7">
    <conflict type="erroneous initiation">
        <sequence resource="EMBL-CDS" id="BAC05140"/>
    </conflict>
    <text>Truncated N-terminus.</text>
</comment>
<proteinExistence type="evidence at protein level"/>
<accession>Q96M83</accession>
<accession>B0QZ71</accession>
<accession>Q08AN7</accession>
<accession>Q5VW55</accession>
<accession>Q8IVQ0</accession>
<accession>Q8N7T7</accession>
<accession>Q8NEQ0</accession>
<accession>Q9H943</accession>
<dbReference type="EMBL" id="AK023093">
    <property type="protein sequence ID" value="BAB14400.1"/>
    <property type="status" value="ALT_SEQ"/>
    <property type="molecule type" value="mRNA"/>
</dbReference>
<dbReference type="EMBL" id="AK057324">
    <property type="protein sequence ID" value="BAB71426.1"/>
    <property type="molecule type" value="mRNA"/>
</dbReference>
<dbReference type="EMBL" id="AK097668">
    <property type="protein sequence ID" value="BAC05140.1"/>
    <property type="status" value="ALT_INIT"/>
    <property type="molecule type" value="mRNA"/>
</dbReference>
<dbReference type="EMBL" id="AL354750">
    <property type="status" value="NOT_ANNOTATED_CDS"/>
    <property type="molecule type" value="Genomic_DNA"/>
</dbReference>
<dbReference type="EMBL" id="AL356053">
    <property type="status" value="NOT_ANNOTATED_CDS"/>
    <property type="molecule type" value="Genomic_DNA"/>
</dbReference>
<dbReference type="EMBL" id="AL365203">
    <property type="status" value="NOT_ANNOTATED_CDS"/>
    <property type="molecule type" value="Genomic_DNA"/>
</dbReference>
<dbReference type="EMBL" id="AL391839">
    <property type="status" value="NOT_ANNOTATED_CDS"/>
    <property type="molecule type" value="Genomic_DNA"/>
</dbReference>
<dbReference type="EMBL" id="AL591850">
    <property type="status" value="NOT_ANNOTATED_CDS"/>
    <property type="molecule type" value="Genomic_DNA"/>
</dbReference>
<dbReference type="EMBL" id="CH471072">
    <property type="protein sequence ID" value="EAW85966.1"/>
    <property type="molecule type" value="Genomic_DNA"/>
</dbReference>
<dbReference type="EMBL" id="BC022020">
    <property type="protein sequence ID" value="AAH22020.2"/>
    <property type="molecule type" value="mRNA"/>
</dbReference>
<dbReference type="EMBL" id="BC042672">
    <property type="protein sequence ID" value="AAH42672.1"/>
    <property type="molecule type" value="mRNA"/>
</dbReference>
<dbReference type="EMBL" id="BC125091">
    <property type="protein sequence ID" value="AAI25092.1"/>
    <property type="status" value="ALT_SEQ"/>
    <property type="molecule type" value="mRNA"/>
</dbReference>
<dbReference type="CCDS" id="CCDS7173.1">
    <molecule id="Q96M83-3"/>
</dbReference>
<dbReference type="CCDS" id="CCDS86081.1">
    <molecule id="Q96M83-1"/>
</dbReference>
<dbReference type="RefSeq" id="NP_001021554.1">
    <molecule id="Q96M83-3"/>
    <property type="nucleotide sequence ID" value="NM_001026383.3"/>
</dbReference>
<dbReference type="RefSeq" id="NP_001308044.1">
    <molecule id="Q96M83-1"/>
    <property type="nucleotide sequence ID" value="NM_001321115.2"/>
</dbReference>
<dbReference type="RefSeq" id="NP_001381944.1">
    <molecule id="Q96M83-1"/>
    <property type="nucleotide sequence ID" value="NM_001395015.1"/>
</dbReference>
<dbReference type="RefSeq" id="NP_659460.3">
    <molecule id="Q96M83-3"/>
    <property type="nucleotide sequence ID" value="NM_145023.5"/>
</dbReference>
<dbReference type="RefSeq" id="XP_011517965.1">
    <property type="nucleotide sequence ID" value="XM_011519663.1"/>
</dbReference>
<dbReference type="RefSeq" id="XP_047281698.1">
    <molecule id="Q96M83-1"/>
    <property type="nucleotide sequence ID" value="XM_047425742.1"/>
</dbReference>
<dbReference type="RefSeq" id="XP_047281699.1">
    <molecule id="Q96M83-1"/>
    <property type="nucleotide sequence ID" value="XM_047425743.1"/>
</dbReference>
<dbReference type="SMR" id="Q96M83"/>
<dbReference type="BioGRID" id="122854">
    <property type="interactions" value="18"/>
</dbReference>
<dbReference type="FunCoup" id="Q96M83">
    <property type="interactions" value="4"/>
</dbReference>
<dbReference type="IntAct" id="Q96M83">
    <property type="interactions" value="11"/>
</dbReference>
<dbReference type="STRING" id="9606.ENSP00000491655"/>
<dbReference type="GlyGen" id="Q96M83">
    <property type="glycosylation" value="2 sites, 1 O-linked glycan (2 sites)"/>
</dbReference>
<dbReference type="iPTMnet" id="Q96M83"/>
<dbReference type="PhosphoSitePlus" id="Q96M83"/>
<dbReference type="BioMuta" id="CCDC7"/>
<dbReference type="DMDM" id="48428133"/>
<dbReference type="jPOST" id="Q96M83"/>
<dbReference type="MassIVE" id="Q96M83"/>
<dbReference type="PaxDb" id="9606-ENSP00000355078"/>
<dbReference type="PeptideAtlas" id="Q96M83"/>
<dbReference type="ProteomicsDB" id="77306">
    <molecule id="Q96M83-1"/>
</dbReference>
<dbReference type="ProteomicsDB" id="77307">
    <molecule id="Q96M83-2"/>
</dbReference>
<dbReference type="ProteomicsDB" id="81280"/>
<dbReference type="ProteomicsDB" id="81281"/>
<dbReference type="ProteomicsDB" id="81282"/>
<dbReference type="Antibodypedia" id="80107">
    <property type="antibodies" value="73 antibodies from 20 providers"/>
</dbReference>
<dbReference type="DNASU" id="221016"/>
<dbReference type="Ensembl" id="ENST00000277657.12">
    <molecule id="Q96M83-3"/>
    <property type="protein sequence ID" value="ENSP00000277657.6"/>
    <property type="gene ID" value="ENSG00000216937.14"/>
</dbReference>
<dbReference type="Ensembl" id="ENST00000362006.11">
    <molecule id="Q96M83-3"/>
    <property type="protein sequence ID" value="ENSP00000355078.5"/>
    <property type="gene ID" value="ENSG00000216937.14"/>
</dbReference>
<dbReference type="Ensembl" id="ENST00000476558.7">
    <molecule id="Q96M83-2"/>
    <property type="protein sequence ID" value="ENSP00000436435.3"/>
    <property type="gene ID" value="ENSG00000216937.14"/>
</dbReference>
<dbReference type="Ensembl" id="ENST00000639629.2">
    <molecule id="Q96M83-1"/>
    <property type="protein sequence ID" value="ENSP00000491655.1"/>
    <property type="gene ID" value="ENSG00000216937.14"/>
</dbReference>
<dbReference type="GeneID" id="79741"/>
<dbReference type="KEGG" id="hsa:79741"/>
<dbReference type="MANE-Select" id="ENST00000639629.2">
    <property type="protein sequence ID" value="ENSP00000491655.1"/>
    <property type="RefSeq nucleotide sequence ID" value="NM_001395015.1"/>
    <property type="RefSeq protein sequence ID" value="NP_001381944.1"/>
</dbReference>
<dbReference type="UCSC" id="uc001iwj.5">
    <molecule id="Q96M83-1"/>
    <property type="organism name" value="human"/>
</dbReference>
<dbReference type="AGR" id="HGNC:26533"/>
<dbReference type="CTD" id="79741"/>
<dbReference type="DisGeNET" id="79741"/>
<dbReference type="GeneCards" id="CCDC7"/>
<dbReference type="HGNC" id="HGNC:26533">
    <property type="gene designation" value="CCDC7"/>
</dbReference>
<dbReference type="HPA" id="ENSG00000216937">
    <property type="expression patterns" value="Tissue enriched (testis)"/>
</dbReference>
<dbReference type="MIM" id="619444">
    <property type="type" value="gene"/>
</dbReference>
<dbReference type="neXtProt" id="NX_Q96M83"/>
<dbReference type="OpenTargets" id="ENSG00000216937"/>
<dbReference type="PharmGKB" id="PA134879457"/>
<dbReference type="VEuPathDB" id="HostDB:ENSG00000216937"/>
<dbReference type="eggNOG" id="ENOG502S48H">
    <property type="taxonomic scope" value="Eukaryota"/>
</dbReference>
<dbReference type="GeneTree" id="ENSGT00940000164808"/>
<dbReference type="HOGENOM" id="CLU_1036434_0_0_1"/>
<dbReference type="InParanoid" id="Q96M83"/>
<dbReference type="OMA" id="TRNESFH"/>
<dbReference type="OrthoDB" id="9048348at2759"/>
<dbReference type="PAN-GO" id="Q96M83">
    <property type="GO annotations" value="0 GO annotations based on evolutionary models"/>
</dbReference>
<dbReference type="TreeFam" id="TF337205"/>
<dbReference type="TreeFam" id="TF351892"/>
<dbReference type="PathwayCommons" id="Q96M83"/>
<dbReference type="SignaLink" id="Q96M83"/>
<dbReference type="BioGRID-ORCS" id="79741">
    <property type="hits" value="20 hits in 1150 CRISPR screens"/>
</dbReference>
<dbReference type="ChiTaRS" id="CCDC7">
    <property type="organism name" value="human"/>
</dbReference>
<dbReference type="GenomeRNAi" id="79741"/>
<dbReference type="Pharos" id="Q96M83">
    <property type="development level" value="Tbio"/>
</dbReference>
<dbReference type="PRO" id="PR:Q96M83"/>
<dbReference type="Proteomes" id="UP000005640">
    <property type="component" value="Chromosome 10"/>
</dbReference>
<dbReference type="RNAct" id="Q96M83">
    <property type="molecule type" value="protein"/>
</dbReference>
<dbReference type="Bgee" id="ENSG00000216937">
    <property type="expression patterns" value="Expressed in calcaneal tendon and 124 other cell types or tissues"/>
</dbReference>
<dbReference type="ExpressionAtlas" id="Q96M83">
    <property type="expression patterns" value="baseline and differential"/>
</dbReference>
<dbReference type="InterPro" id="IPR029272">
    <property type="entry name" value="CCDC7"/>
</dbReference>
<dbReference type="PANTHER" id="PTHR22035">
    <property type="entry name" value="COILED-COIL DOMAIN-CONTAINING PROTEIN 7"/>
    <property type="match status" value="1"/>
</dbReference>
<dbReference type="PANTHER" id="PTHR22035:SF4">
    <property type="entry name" value="COILED-COIL DOMAIN-CONTAINING PROTEIN 7"/>
    <property type="match status" value="1"/>
</dbReference>
<dbReference type="Pfam" id="PF15368">
    <property type="entry name" value="BioT2"/>
    <property type="match status" value="1"/>
</dbReference>
<reference key="1">
    <citation type="journal article" date="2004" name="Nat. Genet.">
        <title>Complete sequencing and characterization of 21,243 full-length human cDNAs.</title>
        <authorList>
            <person name="Ota T."/>
            <person name="Suzuki Y."/>
            <person name="Nishikawa T."/>
            <person name="Otsuki T."/>
            <person name="Sugiyama T."/>
            <person name="Irie R."/>
            <person name="Wakamatsu A."/>
            <person name="Hayashi K."/>
            <person name="Sato H."/>
            <person name="Nagai K."/>
            <person name="Kimura K."/>
            <person name="Makita H."/>
            <person name="Sekine M."/>
            <person name="Obayashi M."/>
            <person name="Nishi T."/>
            <person name="Shibahara T."/>
            <person name="Tanaka T."/>
            <person name="Ishii S."/>
            <person name="Yamamoto J."/>
            <person name="Saito K."/>
            <person name="Kawai Y."/>
            <person name="Isono Y."/>
            <person name="Nakamura Y."/>
            <person name="Nagahari K."/>
            <person name="Murakami K."/>
            <person name="Yasuda T."/>
            <person name="Iwayanagi T."/>
            <person name="Wagatsuma M."/>
            <person name="Shiratori A."/>
            <person name="Sudo H."/>
            <person name="Hosoiri T."/>
            <person name="Kaku Y."/>
            <person name="Kodaira H."/>
            <person name="Kondo H."/>
            <person name="Sugawara M."/>
            <person name="Takahashi M."/>
            <person name="Kanda K."/>
            <person name="Yokoi T."/>
            <person name="Furuya T."/>
            <person name="Kikkawa E."/>
            <person name="Omura Y."/>
            <person name="Abe K."/>
            <person name="Kamihara K."/>
            <person name="Katsuta N."/>
            <person name="Sato K."/>
            <person name="Tanikawa M."/>
            <person name="Yamazaki M."/>
            <person name="Ninomiya K."/>
            <person name="Ishibashi T."/>
            <person name="Yamashita H."/>
            <person name="Murakawa K."/>
            <person name="Fujimori K."/>
            <person name="Tanai H."/>
            <person name="Kimata M."/>
            <person name="Watanabe M."/>
            <person name="Hiraoka S."/>
            <person name="Chiba Y."/>
            <person name="Ishida S."/>
            <person name="Ono Y."/>
            <person name="Takiguchi S."/>
            <person name="Watanabe S."/>
            <person name="Yosida M."/>
            <person name="Hotuta T."/>
            <person name="Kusano J."/>
            <person name="Kanehori K."/>
            <person name="Takahashi-Fujii A."/>
            <person name="Hara H."/>
            <person name="Tanase T.-O."/>
            <person name="Nomura Y."/>
            <person name="Togiya S."/>
            <person name="Komai F."/>
            <person name="Hara R."/>
            <person name="Takeuchi K."/>
            <person name="Arita M."/>
            <person name="Imose N."/>
            <person name="Musashino K."/>
            <person name="Yuuki H."/>
            <person name="Oshima A."/>
            <person name="Sasaki N."/>
            <person name="Aotsuka S."/>
            <person name="Yoshikawa Y."/>
            <person name="Matsunawa H."/>
            <person name="Ichihara T."/>
            <person name="Shiohata N."/>
            <person name="Sano S."/>
            <person name="Moriya S."/>
            <person name="Momiyama H."/>
            <person name="Satoh N."/>
            <person name="Takami S."/>
            <person name="Terashima Y."/>
            <person name="Suzuki O."/>
            <person name="Nakagawa S."/>
            <person name="Senoh A."/>
            <person name="Mizoguchi H."/>
            <person name="Goto Y."/>
            <person name="Shimizu F."/>
            <person name="Wakebe H."/>
            <person name="Hishigaki H."/>
            <person name="Watanabe T."/>
            <person name="Sugiyama A."/>
            <person name="Takemoto M."/>
            <person name="Kawakami B."/>
            <person name="Yamazaki M."/>
            <person name="Watanabe K."/>
            <person name="Kumagai A."/>
            <person name="Itakura S."/>
            <person name="Fukuzumi Y."/>
            <person name="Fujimori Y."/>
            <person name="Komiyama M."/>
            <person name="Tashiro H."/>
            <person name="Tanigami A."/>
            <person name="Fujiwara T."/>
            <person name="Ono T."/>
            <person name="Yamada K."/>
            <person name="Fujii Y."/>
            <person name="Ozaki K."/>
            <person name="Hirao M."/>
            <person name="Ohmori Y."/>
            <person name="Kawabata A."/>
            <person name="Hikiji T."/>
            <person name="Kobatake N."/>
            <person name="Inagaki H."/>
            <person name="Ikema Y."/>
            <person name="Okamoto S."/>
            <person name="Okitani R."/>
            <person name="Kawakami T."/>
            <person name="Noguchi S."/>
            <person name="Itoh T."/>
            <person name="Shigeta K."/>
            <person name="Senba T."/>
            <person name="Matsumura K."/>
            <person name="Nakajima Y."/>
            <person name="Mizuno T."/>
            <person name="Morinaga M."/>
            <person name="Sasaki M."/>
            <person name="Togashi T."/>
            <person name="Oyama M."/>
            <person name="Hata H."/>
            <person name="Watanabe M."/>
            <person name="Komatsu T."/>
            <person name="Mizushima-Sugano J."/>
            <person name="Satoh T."/>
            <person name="Shirai Y."/>
            <person name="Takahashi Y."/>
            <person name="Nakagawa K."/>
            <person name="Okumura K."/>
            <person name="Nagase T."/>
            <person name="Nomura N."/>
            <person name="Kikuchi H."/>
            <person name="Masuho Y."/>
            <person name="Yamashita R."/>
            <person name="Nakai K."/>
            <person name="Yada T."/>
            <person name="Nakamura Y."/>
            <person name="Ohara O."/>
            <person name="Isogai T."/>
            <person name="Sugano S."/>
        </authorList>
    </citation>
    <scope>NUCLEOTIDE SEQUENCE [LARGE SCALE MRNA] (ISOFORM 2)</scope>
    <scope>NUCLEOTIDE SEQUENCE [LARGE SCALE MRNA] OF 418-1385 (ISOFORM 4)</scope>
    <scope>NUCLEOTIDE SEQUENCE [LARGE SCALE MRNA] OF 887-1385 (ISOFORM 1)</scope>
    <scope>VARIANTS ALA-1117 AND ILE-1364</scope>
    <source>
        <tissue>Teratocarcinoma</tissue>
        <tissue>Testis</tissue>
    </source>
</reference>
<reference key="2">
    <citation type="journal article" date="2004" name="Nature">
        <title>The DNA sequence and comparative analysis of human chromosome 10.</title>
        <authorList>
            <person name="Deloukas P."/>
            <person name="Earthrowl M.E."/>
            <person name="Grafham D.V."/>
            <person name="Rubenfield M."/>
            <person name="French L."/>
            <person name="Steward C.A."/>
            <person name="Sims S.K."/>
            <person name="Jones M.C."/>
            <person name="Searle S."/>
            <person name="Scott C."/>
            <person name="Howe K."/>
            <person name="Hunt S.E."/>
            <person name="Andrews T.D."/>
            <person name="Gilbert J.G.R."/>
            <person name="Swarbreck D."/>
            <person name="Ashurst J.L."/>
            <person name="Taylor A."/>
            <person name="Battles J."/>
            <person name="Bird C.P."/>
            <person name="Ainscough R."/>
            <person name="Almeida J.P."/>
            <person name="Ashwell R.I.S."/>
            <person name="Ambrose K.D."/>
            <person name="Babbage A.K."/>
            <person name="Bagguley C.L."/>
            <person name="Bailey J."/>
            <person name="Banerjee R."/>
            <person name="Bates K."/>
            <person name="Beasley H."/>
            <person name="Bray-Allen S."/>
            <person name="Brown A.J."/>
            <person name="Brown J.Y."/>
            <person name="Burford D.C."/>
            <person name="Burrill W."/>
            <person name="Burton J."/>
            <person name="Cahill P."/>
            <person name="Camire D."/>
            <person name="Carter N.P."/>
            <person name="Chapman J.C."/>
            <person name="Clark S.Y."/>
            <person name="Clarke G."/>
            <person name="Clee C.M."/>
            <person name="Clegg S."/>
            <person name="Corby N."/>
            <person name="Coulson A."/>
            <person name="Dhami P."/>
            <person name="Dutta I."/>
            <person name="Dunn M."/>
            <person name="Faulkner L."/>
            <person name="Frankish A."/>
            <person name="Frankland J.A."/>
            <person name="Garner P."/>
            <person name="Garnett J."/>
            <person name="Gribble S."/>
            <person name="Griffiths C."/>
            <person name="Grocock R."/>
            <person name="Gustafson E."/>
            <person name="Hammond S."/>
            <person name="Harley J.L."/>
            <person name="Hart E."/>
            <person name="Heath P.D."/>
            <person name="Ho T.P."/>
            <person name="Hopkins B."/>
            <person name="Horne J."/>
            <person name="Howden P.J."/>
            <person name="Huckle E."/>
            <person name="Hynds C."/>
            <person name="Johnson C."/>
            <person name="Johnson D."/>
            <person name="Kana A."/>
            <person name="Kay M."/>
            <person name="Kimberley A.M."/>
            <person name="Kershaw J.K."/>
            <person name="Kokkinaki M."/>
            <person name="Laird G.K."/>
            <person name="Lawlor S."/>
            <person name="Lee H.M."/>
            <person name="Leongamornlert D.A."/>
            <person name="Laird G."/>
            <person name="Lloyd C."/>
            <person name="Lloyd D.M."/>
            <person name="Loveland J."/>
            <person name="Lovell J."/>
            <person name="McLaren S."/>
            <person name="McLay K.E."/>
            <person name="McMurray A."/>
            <person name="Mashreghi-Mohammadi M."/>
            <person name="Matthews L."/>
            <person name="Milne S."/>
            <person name="Nickerson T."/>
            <person name="Nguyen M."/>
            <person name="Overton-Larty E."/>
            <person name="Palmer S.A."/>
            <person name="Pearce A.V."/>
            <person name="Peck A.I."/>
            <person name="Pelan S."/>
            <person name="Phillimore B."/>
            <person name="Porter K."/>
            <person name="Rice C.M."/>
            <person name="Rogosin A."/>
            <person name="Ross M.T."/>
            <person name="Sarafidou T."/>
            <person name="Sehra H.K."/>
            <person name="Shownkeen R."/>
            <person name="Skuce C.D."/>
            <person name="Smith M."/>
            <person name="Standring L."/>
            <person name="Sycamore N."/>
            <person name="Tester J."/>
            <person name="Thorpe A."/>
            <person name="Torcasso W."/>
            <person name="Tracey A."/>
            <person name="Tromans A."/>
            <person name="Tsolas J."/>
            <person name="Wall M."/>
            <person name="Walsh J."/>
            <person name="Wang H."/>
            <person name="Weinstock K."/>
            <person name="West A.P."/>
            <person name="Willey D.L."/>
            <person name="Whitehead S.L."/>
            <person name="Wilming L."/>
            <person name="Wray P.W."/>
            <person name="Young L."/>
            <person name="Chen Y."/>
            <person name="Lovering R.C."/>
            <person name="Moschonas N.K."/>
            <person name="Siebert R."/>
            <person name="Fechtel K."/>
            <person name="Bentley D."/>
            <person name="Durbin R.M."/>
            <person name="Hubbard T."/>
            <person name="Doucette-Stamm L."/>
            <person name="Beck S."/>
            <person name="Smith D.R."/>
            <person name="Rogers J."/>
        </authorList>
    </citation>
    <scope>NUCLEOTIDE SEQUENCE [LARGE SCALE GENOMIC DNA]</scope>
</reference>
<reference key="3">
    <citation type="submission" date="2005-09" db="EMBL/GenBank/DDBJ databases">
        <authorList>
            <person name="Mural R.J."/>
            <person name="Istrail S."/>
            <person name="Sutton G.G."/>
            <person name="Florea L."/>
            <person name="Halpern A.L."/>
            <person name="Mobarry C.M."/>
            <person name="Lippert R."/>
            <person name="Walenz B."/>
            <person name="Shatkay H."/>
            <person name="Dew I."/>
            <person name="Miller J.R."/>
            <person name="Flanigan M.J."/>
            <person name="Edwards N.J."/>
            <person name="Bolanos R."/>
            <person name="Fasulo D."/>
            <person name="Halldorsson B.V."/>
            <person name="Hannenhalli S."/>
            <person name="Turner R."/>
            <person name="Yooseph S."/>
            <person name="Lu F."/>
            <person name="Nusskern D.R."/>
            <person name="Shue B.C."/>
            <person name="Zheng X.H."/>
            <person name="Zhong F."/>
            <person name="Delcher A.L."/>
            <person name="Huson D.H."/>
            <person name="Kravitz S.A."/>
            <person name="Mouchard L."/>
            <person name="Reinert K."/>
            <person name="Remington K.A."/>
            <person name="Clark A.G."/>
            <person name="Waterman M.S."/>
            <person name="Eichler E.E."/>
            <person name="Adams M.D."/>
            <person name="Hunkapiller M.W."/>
            <person name="Myers E.W."/>
            <person name="Venter J.C."/>
        </authorList>
    </citation>
    <scope>NUCLEOTIDE SEQUENCE [LARGE SCALE GENOMIC DNA]</scope>
</reference>
<reference key="4">
    <citation type="journal article" date="2004" name="Genome Res.">
        <title>The status, quality, and expansion of the NIH full-length cDNA project: the Mammalian Gene Collection (MGC).</title>
        <authorList>
            <consortium name="The MGC Project Team"/>
        </authorList>
    </citation>
    <scope>NUCLEOTIDE SEQUENCE [LARGE SCALE MRNA] (ISOFORM 3)</scope>
    <scope>NUCLEOTIDE SEQUENCE [LARGE SCALE MRNA] OF 456-1385 (ISOFORM 5)</scope>
    <source>
        <tissue>Brain</tissue>
        <tissue>Testis</tissue>
    </source>
</reference>
<reference key="5">
    <citation type="journal article" date="2011" name="Oncol. Rep.">
        <title>Overexpression of the hBiot2 gene is associated with development of human cervical cancer.</title>
        <authorList>
            <person name="Shen Y.M."/>
            <person name="He X."/>
            <person name="Deng H.X."/>
            <person name="Xie Y.P."/>
            <person name="Wang C.T."/>
            <person name="Wei Y.Q."/>
            <person name="Zhao X."/>
        </authorList>
    </citation>
    <scope>TISSUE SPECIFICITY</scope>
</reference>
<organism>
    <name type="scientific">Homo sapiens</name>
    <name type="common">Human</name>
    <dbReference type="NCBI Taxonomy" id="9606"/>
    <lineage>
        <taxon>Eukaryota</taxon>
        <taxon>Metazoa</taxon>
        <taxon>Chordata</taxon>
        <taxon>Craniata</taxon>
        <taxon>Vertebrata</taxon>
        <taxon>Euteleostomi</taxon>
        <taxon>Mammalia</taxon>
        <taxon>Eutheria</taxon>
        <taxon>Euarchontoglires</taxon>
        <taxon>Primates</taxon>
        <taxon>Haplorrhini</taxon>
        <taxon>Catarrhini</taxon>
        <taxon>Hominidae</taxon>
        <taxon>Homo</taxon>
    </lineage>
</organism>
<keyword id="KW-0025">Alternative splicing</keyword>
<keyword id="KW-0175">Coiled coil</keyword>
<keyword id="KW-1267">Proteomics identification</keyword>
<keyword id="KW-1185">Reference proteome</keyword>
<evidence type="ECO:0000250" key="1">
    <source>
        <dbReference type="UniProtKB" id="Q9D541"/>
    </source>
</evidence>
<evidence type="ECO:0000255" key="2"/>
<evidence type="ECO:0000256" key="3">
    <source>
        <dbReference type="SAM" id="MobiDB-lite"/>
    </source>
</evidence>
<evidence type="ECO:0000269" key="4">
    <source>
    </source>
</evidence>
<evidence type="ECO:0000269" key="5">
    <source>
    </source>
</evidence>
<evidence type="ECO:0000303" key="6">
    <source>
    </source>
</evidence>
<evidence type="ECO:0000305" key="7"/>
<feature type="chain" id="PRO_0000089399" description="Coiled-coil domain-containing protein 7">
    <location>
        <begin position="1"/>
        <end position="1385"/>
    </location>
</feature>
<feature type="region of interest" description="Disordered" evidence="3">
    <location>
        <begin position="329"/>
        <end position="364"/>
    </location>
</feature>
<feature type="region of interest" description="Disordered" evidence="3">
    <location>
        <begin position="422"/>
        <end position="545"/>
    </location>
</feature>
<feature type="region of interest" description="Disordered" evidence="3">
    <location>
        <begin position="572"/>
        <end position="752"/>
    </location>
</feature>
<feature type="region of interest" description="Disordered" evidence="3">
    <location>
        <begin position="809"/>
        <end position="834"/>
    </location>
</feature>
<feature type="coiled-coil region" evidence="2">
    <location>
        <begin position="299"/>
        <end position="330"/>
    </location>
</feature>
<feature type="coiled-coil region" evidence="2">
    <location>
        <begin position="374"/>
        <end position="411"/>
    </location>
</feature>
<feature type="compositionally biased region" description="Basic residues" evidence="3">
    <location>
        <begin position="339"/>
        <end position="352"/>
    </location>
</feature>
<feature type="compositionally biased region" description="Basic and acidic residues" evidence="3">
    <location>
        <begin position="353"/>
        <end position="364"/>
    </location>
</feature>
<feature type="compositionally biased region" description="Polar residues" evidence="3">
    <location>
        <begin position="425"/>
        <end position="436"/>
    </location>
</feature>
<feature type="compositionally biased region" description="Basic and acidic residues" evidence="3">
    <location>
        <begin position="437"/>
        <end position="455"/>
    </location>
</feature>
<feature type="compositionally biased region" description="Basic and acidic residues" evidence="3">
    <location>
        <begin position="481"/>
        <end position="490"/>
    </location>
</feature>
<feature type="compositionally biased region" description="Polar residues" evidence="3">
    <location>
        <begin position="493"/>
        <end position="503"/>
    </location>
</feature>
<feature type="compositionally biased region" description="Polar residues" evidence="3">
    <location>
        <begin position="511"/>
        <end position="528"/>
    </location>
</feature>
<feature type="compositionally biased region" description="Polar residues" evidence="3">
    <location>
        <begin position="536"/>
        <end position="545"/>
    </location>
</feature>
<feature type="compositionally biased region" description="Basic and acidic residues" evidence="3">
    <location>
        <begin position="573"/>
        <end position="589"/>
    </location>
</feature>
<feature type="compositionally biased region" description="Polar residues" evidence="3">
    <location>
        <begin position="654"/>
        <end position="664"/>
    </location>
</feature>
<feature type="compositionally biased region" description="Basic and acidic residues" evidence="3">
    <location>
        <begin position="665"/>
        <end position="676"/>
    </location>
</feature>
<feature type="compositionally biased region" description="Basic and acidic residues" evidence="3">
    <location>
        <begin position="685"/>
        <end position="697"/>
    </location>
</feature>
<feature type="compositionally biased region" description="Polar residues" evidence="3">
    <location>
        <begin position="701"/>
        <end position="711"/>
    </location>
</feature>
<feature type="compositionally biased region" description="Basic and acidic residues" evidence="3">
    <location>
        <begin position="712"/>
        <end position="726"/>
    </location>
</feature>
<feature type="splice variant" id="VSP_010525" description="In isoform 2." evidence="6">
    <original>T</original>
    <variation>L</variation>
    <location>
        <position position="267"/>
    </location>
</feature>
<feature type="splice variant" id="VSP_010526" description="In isoform 2." evidence="6">
    <location>
        <begin position="268"/>
        <end position="1385"/>
    </location>
</feature>
<feature type="splice variant" id="VSP_058366" description="In isoform 5.">
    <original>ITAQSGRLIEKSSEKKRSSPAISDLSQILKSQDESAFLESSNE</original>
    <variation>AVQETWCRHLLLARASGSFYSCRKVKWEQICHTLIMKYQMKGL</variation>
    <location>
        <begin position="474"/>
        <end position="516"/>
    </location>
</feature>
<feature type="splice variant" id="VSP_058367" description="In isoform 4.">
    <original>ITAQSG</original>
    <variation>LREETI</variation>
    <location>
        <begin position="474"/>
        <end position="479"/>
    </location>
</feature>
<feature type="splice variant" id="VSP_058368" description="In isoform 4.">
    <location>
        <begin position="480"/>
        <end position="1385"/>
    </location>
</feature>
<feature type="splice variant" id="VSP_058369" description="In isoform 3.">
    <original>SS</original>
    <variation>RC</variation>
    <location>
        <begin position="485"/>
        <end position="486"/>
    </location>
</feature>
<feature type="splice variant" id="VSP_058370" description="In isoform 3.">
    <location>
        <begin position="487"/>
        <end position="1385"/>
    </location>
</feature>
<feature type="splice variant" id="VSP_058371" description="In isoform 5.">
    <location>
        <begin position="517"/>
        <end position="1385"/>
    </location>
</feature>
<feature type="sequence variant" id="VAR_061586" description="In dbSNP:rs56391924.">
    <original>K</original>
    <variation>Q</variation>
    <location>
        <position position="148"/>
    </location>
</feature>
<feature type="sequence variant" id="VAR_050766" description="In dbSNP:rs12268559.">
    <original>K</original>
    <variation>T</variation>
    <location>
        <position position="449"/>
    </location>
</feature>
<feature type="sequence variant" id="VAR_033692" description="In dbSNP:rs4448627." evidence="4">
    <original>G</original>
    <variation>A</variation>
    <location>
        <position position="1117"/>
    </location>
</feature>
<feature type="sequence variant" id="VAR_024308" description="In dbSNP:rs2504011.">
    <original>M</original>
    <variation>T</variation>
    <location>
        <position position="1267"/>
    </location>
</feature>
<feature type="sequence variant" id="VAR_033693" description="In dbSNP:rs1418538." evidence="4">
    <original>V</original>
    <variation>I</variation>
    <location>
        <position position="1364"/>
    </location>
</feature>
<feature type="sequence conflict" description="In Ref. 1; BAC05140." evidence="7" ref="1">
    <original>R</original>
    <variation>Q</variation>
    <location>
        <position position="1055"/>
    </location>
</feature>
<feature type="sequence conflict" description="In Ref. 1; BAC05140." evidence="7" ref="1">
    <original>T</original>
    <variation>A</variation>
    <location>
        <position position="1287"/>
    </location>
</feature>
<gene>
    <name type="primary">CCDC7</name>
    <name type="synonym">BIOT2</name>
    <name type="synonym">C10orf68</name>
</gene>
<protein>
    <recommendedName>
        <fullName>Coiled-coil domain-containing protein 7</fullName>
    </recommendedName>
    <alternativeName>
        <fullName>Protein BIOT2</fullName>
    </alternativeName>
</protein>
<name>CCDC7_HUMAN</name>